<gene>
    <name type="primary">TIP4-1</name>
    <name type="ordered locus">At2g25810</name>
    <name type="ORF">F17H15.16</name>
</gene>
<reference key="1">
    <citation type="journal article" date="1999" name="Nature">
        <title>Sequence and analysis of chromosome 2 of the plant Arabidopsis thaliana.</title>
        <authorList>
            <person name="Lin X."/>
            <person name="Kaul S."/>
            <person name="Rounsley S.D."/>
            <person name="Shea T.P."/>
            <person name="Benito M.-I."/>
            <person name="Town C.D."/>
            <person name="Fujii C.Y."/>
            <person name="Mason T.M."/>
            <person name="Bowman C.L."/>
            <person name="Barnstead M.E."/>
            <person name="Feldblyum T.V."/>
            <person name="Buell C.R."/>
            <person name="Ketchum K.A."/>
            <person name="Lee J.J."/>
            <person name="Ronning C.M."/>
            <person name="Koo H.L."/>
            <person name="Moffat K.S."/>
            <person name="Cronin L.A."/>
            <person name="Shen M."/>
            <person name="Pai G."/>
            <person name="Van Aken S."/>
            <person name="Umayam L."/>
            <person name="Tallon L.J."/>
            <person name="Gill J.E."/>
            <person name="Adams M.D."/>
            <person name="Carrera A.J."/>
            <person name="Creasy T.H."/>
            <person name="Goodman H.M."/>
            <person name="Somerville C.R."/>
            <person name="Copenhaver G.P."/>
            <person name="Preuss D."/>
            <person name="Nierman W.C."/>
            <person name="White O."/>
            <person name="Eisen J.A."/>
            <person name="Salzberg S.L."/>
            <person name="Fraser C.M."/>
            <person name="Venter J.C."/>
        </authorList>
    </citation>
    <scope>NUCLEOTIDE SEQUENCE [LARGE SCALE GENOMIC DNA]</scope>
    <source>
        <strain>cv. Columbia</strain>
    </source>
</reference>
<reference key="2">
    <citation type="journal article" date="2017" name="Plant J.">
        <title>Araport11: a complete reannotation of the Arabidopsis thaliana reference genome.</title>
        <authorList>
            <person name="Cheng C.Y."/>
            <person name="Krishnakumar V."/>
            <person name="Chan A.P."/>
            <person name="Thibaud-Nissen F."/>
            <person name="Schobel S."/>
            <person name="Town C.D."/>
        </authorList>
    </citation>
    <scope>GENOME REANNOTATION</scope>
    <source>
        <strain>cv. Columbia</strain>
    </source>
</reference>
<reference key="3">
    <citation type="submission" date="2004-05" db="EMBL/GenBank/DDBJ databases">
        <title>Arabidopsis ORF clones.</title>
        <authorList>
            <person name="Shinn P."/>
            <person name="Chen H."/>
            <person name="Cheuk R.F."/>
            <person name="Kim C.J."/>
            <person name="Carninci P."/>
            <person name="Hayashizaki Y."/>
            <person name="Ishida J."/>
            <person name="Kamiya A."/>
            <person name="Kawai J."/>
            <person name="Narusaka M."/>
            <person name="Sakurai T."/>
            <person name="Satou M."/>
            <person name="Seki M."/>
            <person name="Shinozaki K."/>
            <person name="Ecker J.R."/>
        </authorList>
    </citation>
    <scope>NUCLEOTIDE SEQUENCE [LARGE SCALE MRNA]</scope>
    <source>
        <strain>cv. Columbia</strain>
    </source>
</reference>
<reference key="4">
    <citation type="submission" date="2006-07" db="EMBL/GenBank/DDBJ databases">
        <title>Large-scale analysis of RIKEN Arabidopsis full-length (RAFL) cDNAs.</title>
        <authorList>
            <person name="Totoki Y."/>
            <person name="Seki M."/>
            <person name="Ishida J."/>
            <person name="Nakajima M."/>
            <person name="Enju A."/>
            <person name="Kamiya A."/>
            <person name="Narusaka M."/>
            <person name="Shin-i T."/>
            <person name="Nakagawa M."/>
            <person name="Sakamoto N."/>
            <person name="Oishi K."/>
            <person name="Kohara Y."/>
            <person name="Kobayashi M."/>
            <person name="Toyoda A."/>
            <person name="Sakaki Y."/>
            <person name="Sakurai T."/>
            <person name="Iida K."/>
            <person name="Akiyama K."/>
            <person name="Satou M."/>
            <person name="Toyoda T."/>
            <person name="Konagaya A."/>
            <person name="Carninci P."/>
            <person name="Kawai J."/>
            <person name="Hayashizaki Y."/>
            <person name="Shinozaki K."/>
        </authorList>
    </citation>
    <scope>NUCLEOTIDE SEQUENCE [LARGE SCALE MRNA]</scope>
    <source>
        <strain>cv. Columbia</strain>
    </source>
</reference>
<reference key="5">
    <citation type="journal article" date="2002" name="Genome Biol.">
        <title>From genome to function: the Arabidopsis aquaporins.</title>
        <authorList>
            <person name="Quigley F."/>
            <person name="Rosenberg J.M."/>
            <person name="Shachar-Hill Y."/>
            <person name="Bohnert H.J."/>
        </authorList>
    </citation>
    <scope>NOMENCLATURE</scope>
    <scope>TISSUE SPECIFICITY</scope>
</reference>
<reference key="6">
    <citation type="journal article" date="2003" name="Plant Physiol.">
        <title>Urea transport by nitrogen-regulated tonoplast intrinsic proteins in Arabidopsis.</title>
        <authorList>
            <person name="Liu L.-H."/>
            <person name="Ludewig U."/>
            <person name="Gassert B."/>
            <person name="Frommer W.B."/>
            <person name="von Wiren N."/>
        </authorList>
    </citation>
    <scope>FUNCTION</scope>
    <scope>SUBCELLULAR LOCATION</scope>
    <scope>DEVELOPMENTAL STAGE</scope>
</reference>
<dbReference type="EMBL" id="AC005395">
    <property type="protein sequence ID" value="AAC42249.1"/>
    <property type="molecule type" value="Genomic_DNA"/>
</dbReference>
<dbReference type="EMBL" id="CP002685">
    <property type="protein sequence ID" value="AEC07755.1"/>
    <property type="molecule type" value="Genomic_DNA"/>
</dbReference>
<dbReference type="EMBL" id="BT012635">
    <property type="protein sequence ID" value="AAT06454.1"/>
    <property type="molecule type" value="mRNA"/>
</dbReference>
<dbReference type="EMBL" id="AK226190">
    <property type="protein sequence ID" value="BAE98355.1"/>
    <property type="molecule type" value="mRNA"/>
</dbReference>
<dbReference type="PIR" id="A84653">
    <property type="entry name" value="A84653"/>
</dbReference>
<dbReference type="RefSeq" id="NP_180152.1">
    <property type="nucleotide sequence ID" value="NM_128141.6"/>
</dbReference>
<dbReference type="SMR" id="O82316"/>
<dbReference type="BioGRID" id="2475">
    <property type="interactions" value="16"/>
</dbReference>
<dbReference type="FunCoup" id="O82316">
    <property type="interactions" value="710"/>
</dbReference>
<dbReference type="IntAct" id="O82316">
    <property type="interactions" value="16"/>
</dbReference>
<dbReference type="STRING" id="3702.O82316"/>
<dbReference type="PaxDb" id="3702-AT2G25810.1"/>
<dbReference type="ProteomicsDB" id="234431"/>
<dbReference type="EnsemblPlants" id="AT2G25810.1">
    <property type="protein sequence ID" value="AT2G25810.1"/>
    <property type="gene ID" value="AT2G25810"/>
</dbReference>
<dbReference type="GeneID" id="817123"/>
<dbReference type="Gramene" id="AT2G25810.1">
    <property type="protein sequence ID" value="AT2G25810.1"/>
    <property type="gene ID" value="AT2G25810"/>
</dbReference>
<dbReference type="KEGG" id="ath:AT2G25810"/>
<dbReference type="Araport" id="AT2G25810"/>
<dbReference type="TAIR" id="AT2G25810">
    <property type="gene designation" value="TIP4"/>
</dbReference>
<dbReference type="eggNOG" id="KOG0223">
    <property type="taxonomic scope" value="Eukaryota"/>
</dbReference>
<dbReference type="HOGENOM" id="CLU_020019_3_4_1"/>
<dbReference type="InParanoid" id="O82316"/>
<dbReference type="OMA" id="RAFLYWI"/>
<dbReference type="PhylomeDB" id="O82316"/>
<dbReference type="PRO" id="PR:O82316"/>
<dbReference type="Proteomes" id="UP000006548">
    <property type="component" value="Chromosome 2"/>
</dbReference>
<dbReference type="ExpressionAtlas" id="O82316">
    <property type="expression patterns" value="baseline and differential"/>
</dbReference>
<dbReference type="GO" id="GO:0042807">
    <property type="term" value="C:central vacuole"/>
    <property type="evidence" value="ECO:0000314"/>
    <property type="project" value="TAIR"/>
</dbReference>
<dbReference type="GO" id="GO:0009705">
    <property type="term" value="C:plant-type vacuole membrane"/>
    <property type="evidence" value="ECO:0000314"/>
    <property type="project" value="TAIR"/>
</dbReference>
<dbReference type="GO" id="GO:0015267">
    <property type="term" value="F:channel activity"/>
    <property type="evidence" value="ECO:0007669"/>
    <property type="project" value="InterPro"/>
</dbReference>
<dbReference type="CDD" id="cd00333">
    <property type="entry name" value="MIP"/>
    <property type="match status" value="1"/>
</dbReference>
<dbReference type="FunFam" id="1.20.1080.10:FF:000002">
    <property type="entry name" value="Probable aquaporin TIP1-1"/>
    <property type="match status" value="1"/>
</dbReference>
<dbReference type="Gene3D" id="1.20.1080.10">
    <property type="entry name" value="Glycerol uptake facilitator protein"/>
    <property type="match status" value="1"/>
</dbReference>
<dbReference type="InterPro" id="IPR023271">
    <property type="entry name" value="Aquaporin-like"/>
</dbReference>
<dbReference type="InterPro" id="IPR034294">
    <property type="entry name" value="Aquaporin_transptr"/>
</dbReference>
<dbReference type="InterPro" id="IPR000425">
    <property type="entry name" value="MIP"/>
</dbReference>
<dbReference type="InterPro" id="IPR022357">
    <property type="entry name" value="MIP_CS"/>
</dbReference>
<dbReference type="NCBIfam" id="TIGR00861">
    <property type="entry name" value="MIP"/>
    <property type="match status" value="1"/>
</dbReference>
<dbReference type="PANTHER" id="PTHR45665:SF26">
    <property type="entry name" value="AQUAPORIN TIP4-1"/>
    <property type="match status" value="1"/>
</dbReference>
<dbReference type="PANTHER" id="PTHR45665">
    <property type="entry name" value="AQUAPORIN-8"/>
    <property type="match status" value="1"/>
</dbReference>
<dbReference type="Pfam" id="PF00230">
    <property type="entry name" value="MIP"/>
    <property type="match status" value="1"/>
</dbReference>
<dbReference type="PRINTS" id="PR00783">
    <property type="entry name" value="MINTRINSICP"/>
</dbReference>
<dbReference type="SUPFAM" id="SSF81338">
    <property type="entry name" value="Aquaporin-like"/>
    <property type="match status" value="1"/>
</dbReference>
<dbReference type="PROSITE" id="PS00221">
    <property type="entry name" value="MIP"/>
    <property type="match status" value="1"/>
</dbReference>
<protein>
    <recommendedName>
        <fullName>Aquaporin TIP4-1</fullName>
    </recommendedName>
    <alternativeName>
        <fullName>Epsilon-tonoplast intrinsic protein</fullName>
        <shortName>Epsilon-TIP</shortName>
    </alternativeName>
    <alternativeName>
        <fullName>Tonoplast intrinsic protein 4-1</fullName>
        <shortName>AtTIP4;1</shortName>
    </alternativeName>
</protein>
<feature type="chain" id="PRO_0000064016" description="Aquaporin TIP4-1">
    <location>
        <begin position="1"/>
        <end position="249"/>
    </location>
</feature>
<feature type="topological domain" description="Cytoplasmic" evidence="3">
    <location>
        <begin position="1"/>
        <end position="20"/>
    </location>
</feature>
<feature type="transmembrane region" description="Helical; Name=1" evidence="3">
    <location>
        <begin position="21"/>
        <end position="41"/>
    </location>
</feature>
<feature type="topological domain" description="Vacuolar" evidence="3">
    <location>
        <begin position="42"/>
        <end position="49"/>
    </location>
</feature>
<feature type="transmembrane region" description="Helical; Name=2" evidence="3">
    <location>
        <begin position="50"/>
        <end position="70"/>
    </location>
</feature>
<feature type="topological domain" description="Cytoplasmic" evidence="3">
    <location>
        <begin position="71"/>
        <end position="105"/>
    </location>
</feature>
<feature type="transmembrane region" description="Helical; Name=3" evidence="3">
    <location>
        <begin position="106"/>
        <end position="126"/>
    </location>
</feature>
<feature type="topological domain" description="Vacuolar" evidence="3">
    <location>
        <begin position="127"/>
        <end position="137"/>
    </location>
</feature>
<feature type="transmembrane region" description="Helical; Name=4" evidence="3">
    <location>
        <begin position="138"/>
        <end position="158"/>
    </location>
</feature>
<feature type="topological domain" description="Cytoplasmic" evidence="3">
    <location>
        <begin position="159"/>
        <end position="166"/>
    </location>
</feature>
<feature type="transmembrane region" description="Helical; Name=5" evidence="3">
    <location>
        <begin position="167"/>
        <end position="187"/>
    </location>
</feature>
<feature type="topological domain" description="Vacuolar" evidence="3">
    <location>
        <begin position="188"/>
        <end position="212"/>
    </location>
</feature>
<feature type="transmembrane region" description="Helical; Name=6" evidence="3">
    <location>
        <begin position="213"/>
        <end position="233"/>
    </location>
</feature>
<feature type="topological domain" description="Cytoplasmic" evidence="3">
    <location>
        <begin position="234"/>
        <end position="249"/>
    </location>
</feature>
<feature type="short sequence motif" description="NPA 1">
    <location>
        <begin position="79"/>
        <end position="81"/>
    </location>
</feature>
<feature type="short sequence motif" description="NPA 2">
    <location>
        <begin position="193"/>
        <end position="195"/>
    </location>
</feature>
<feature type="modified residue" description="N-acetylmethionine" evidence="2">
    <location>
        <position position="1"/>
    </location>
</feature>
<feature type="modified residue" description="N6,N6-dimethyllysine" evidence="1">
    <location>
        <position position="3"/>
    </location>
</feature>
<comment type="function">
    <text evidence="5">Aquaporins facilitate the transport of water and small neutral solutes across cell membranes. Transports urea in yeast cells in a pH-independent manner.</text>
</comment>
<comment type="subcellular location">
    <subcellularLocation>
        <location evidence="5">Vacuole membrane</location>
        <topology evidence="5">Multi-pass membrane protein</topology>
    </subcellularLocation>
    <text>Tonoplast.</text>
</comment>
<comment type="tissue specificity">
    <text evidence="4">Expressed in roots.</text>
</comment>
<comment type="developmental stage">
    <text evidence="5">Starts to be expressed in seedlings from 2 days ays after germination.</text>
</comment>
<comment type="domain">
    <text>Aquaporins contain two tandem repeats each containing three membrane-spanning domains and a pore-forming loop with the signature motif Asn-Pro-Ala (NPA).</text>
</comment>
<comment type="similarity">
    <text evidence="6">Belongs to the MIP/aquaporin (TC 1.A.8) family. TIP (TC 1.A.8.10) subfamily.</text>
</comment>
<keyword id="KW-0007">Acetylation</keyword>
<keyword id="KW-0472">Membrane</keyword>
<keyword id="KW-0488">Methylation</keyword>
<keyword id="KW-1185">Reference proteome</keyword>
<keyword id="KW-0677">Repeat</keyword>
<keyword id="KW-0812">Transmembrane</keyword>
<keyword id="KW-1133">Transmembrane helix</keyword>
<keyword id="KW-0813">Transport</keyword>
<keyword id="KW-0926">Vacuole</keyword>
<proteinExistence type="evidence at transcript level"/>
<evidence type="ECO:0000250" key="1">
    <source>
        <dbReference type="UniProtKB" id="P43286"/>
    </source>
</evidence>
<evidence type="ECO:0000250" key="2">
    <source>
        <dbReference type="UniProtKB" id="P61837"/>
    </source>
</evidence>
<evidence type="ECO:0000255" key="3"/>
<evidence type="ECO:0000269" key="4">
    <source>
    </source>
</evidence>
<evidence type="ECO:0000269" key="5">
    <source>
    </source>
</evidence>
<evidence type="ECO:0000305" key="6"/>
<accession>O82316</accession>
<accession>Q53XD1</accession>
<name>TIP41_ARATH</name>
<organism>
    <name type="scientific">Arabidopsis thaliana</name>
    <name type="common">Mouse-ear cress</name>
    <dbReference type="NCBI Taxonomy" id="3702"/>
    <lineage>
        <taxon>Eukaryota</taxon>
        <taxon>Viridiplantae</taxon>
        <taxon>Streptophyta</taxon>
        <taxon>Embryophyta</taxon>
        <taxon>Tracheophyta</taxon>
        <taxon>Spermatophyta</taxon>
        <taxon>Magnoliopsida</taxon>
        <taxon>eudicotyledons</taxon>
        <taxon>Gunneridae</taxon>
        <taxon>Pentapetalae</taxon>
        <taxon>rosids</taxon>
        <taxon>malvids</taxon>
        <taxon>Brassicales</taxon>
        <taxon>Brassicaceae</taxon>
        <taxon>Camelineae</taxon>
        <taxon>Arabidopsis</taxon>
    </lineage>
</organism>
<sequence length="249" mass="26073">MKKIELGHHSEAAKPDCIKALIVEFITTFLFVFAGVGSAMATDSLVGNTLVGLFAVAVAHAFVVAVMISAGHISGGHLNPAVTLGLLLGGHISVFRAFLYWIDQLLASSAACFLLSYLTGGMGTPVHTLASGVSYTQGIIWEIILTFSLLFTVYATIVDPKKGSLDGFGPLLTGFVVGANILAGGAFSGASMNPARSFGPALVSGNWTDHWVYWVGPLIGGGLAGFIYENVLIDRPHVPVADDEQPLLN</sequence>